<keyword id="KW-0002">3D-structure</keyword>
<keyword id="KW-0167">Capsid protein</keyword>
<keyword id="KW-1139">Helical capsid protein</keyword>
<keyword id="KW-1035">Host cytoplasm</keyword>
<keyword id="KW-0687">Ribonucleoprotein</keyword>
<keyword id="KW-0694">RNA-binding</keyword>
<keyword id="KW-0543">Viral nucleoprotein</keyword>
<keyword id="KW-0946">Virion</keyword>
<feature type="chain" id="PRO_0000142667" description="Nucleoprotein">
    <location>
        <begin position="1"/>
        <end position="515"/>
    </location>
</feature>
<feature type="region of interest" description="Ncore" evidence="7">
    <location>
        <begin position="1"/>
        <end position="403"/>
    </location>
</feature>
<feature type="region of interest" description="Ntail" evidence="7">
    <location>
        <begin position="404"/>
        <end position="515"/>
    </location>
</feature>
<feature type="region of interest" description="Disordered" evidence="3">
    <location>
        <begin position="450"/>
        <end position="515"/>
    </location>
</feature>
<feature type="region of interest" description="Interaction with the phosphoprotein" evidence="2">
    <location>
        <begin position="457"/>
        <end position="466"/>
    </location>
</feature>
<feature type="compositionally biased region" description="Basic and acidic residues" evidence="3">
    <location>
        <begin position="452"/>
        <end position="487"/>
    </location>
</feature>
<feature type="compositionally biased region" description="Polar residues" evidence="3">
    <location>
        <begin position="489"/>
        <end position="500"/>
    </location>
</feature>
<feature type="binding site" evidence="1">
    <location>
        <position position="179"/>
    </location>
    <ligand>
        <name>RNA</name>
        <dbReference type="ChEBI" id="CHEBI:33697"/>
    </ligand>
</feature>
<feature type="binding site" evidence="1">
    <location>
        <position position="189"/>
    </location>
    <ligand>
        <name>RNA</name>
        <dbReference type="ChEBI" id="CHEBI:33697"/>
    </ligand>
</feature>
<feature type="binding site" evidence="1">
    <location>
        <position position="194"/>
    </location>
    <ligand>
        <name>RNA</name>
        <dbReference type="ChEBI" id="CHEBI:33697"/>
    </ligand>
</feature>
<feature type="binding site" evidence="1">
    <location>
        <position position="259"/>
    </location>
    <ligand>
        <name>RNA</name>
        <dbReference type="ChEBI" id="CHEBI:33697"/>
    </ligand>
</feature>
<feature type="binding site" evidence="1">
    <location>
        <position position="349"/>
    </location>
    <ligand>
        <name>RNA</name>
        <dbReference type="ChEBI" id="CHEBI:33697"/>
    </ligand>
</feature>
<feature type="binding site" evidence="1">
    <location>
        <position position="353"/>
    </location>
    <ligand>
        <name>RNA</name>
        <dbReference type="ChEBI" id="CHEBI:33697"/>
    </ligand>
</feature>
<feature type="sequence variant" description="In strain: Isolate 104B44.">
    <original>N</original>
    <variation>D</variation>
    <location>
        <position position="45"/>
    </location>
</feature>
<feature type="sequence variant" description="In strain: JS.">
    <original>E</original>
    <variation>R</variation>
    <location>
        <position position="104"/>
    </location>
</feature>
<feature type="sequence variant" description="In strain: JS.">
    <original>E</original>
    <variation>D</variation>
    <location>
        <position position="129"/>
    </location>
</feature>
<feature type="sequence variant" description="In strain: Isolate 104B44.">
    <original>T</original>
    <variation>S</variation>
    <location>
        <position position="284"/>
    </location>
</feature>
<feature type="sequence variant" description="In strain: JS.">
    <original>A</original>
    <variation>S</variation>
    <location>
        <position position="389"/>
    </location>
</feature>
<feature type="sequence variant" description="In strain: JS.">
    <original>D</original>
    <variation>N</variation>
    <location>
        <position position="436"/>
    </location>
</feature>
<feature type="sequence variant" description="In strain: JS.">
    <original>R</original>
    <variation>Q</variation>
    <location>
        <position position="457"/>
    </location>
</feature>
<feature type="sequence variant" description="In strain: JS.">
    <original>G</original>
    <variation>S</variation>
    <location>
        <position position="489"/>
    </location>
</feature>
<feature type="sequence variant" description="In strain: JS.">
    <original>S</original>
    <variation>P</variation>
    <location>
        <position position="493"/>
    </location>
</feature>
<feature type="mutagenesis site" description="Complete loss of IBs formation. No inhibition of stress granules formation." evidence="5">
    <original>L</original>
    <variation>A</variation>
    <location>
        <position position="478"/>
    </location>
</feature>
<feature type="strand" evidence="10">
    <location>
        <begin position="30"/>
        <end position="37"/>
    </location>
</feature>
<feature type="helix" evidence="10">
    <location>
        <begin position="44"/>
        <end position="58"/>
    </location>
</feature>
<feature type="helix" evidence="10">
    <location>
        <begin position="65"/>
        <end position="78"/>
    </location>
</feature>
<feature type="helix" evidence="10">
    <location>
        <begin position="83"/>
        <end position="90"/>
    </location>
</feature>
<feature type="strand" evidence="10">
    <location>
        <begin position="94"/>
        <end position="105"/>
    </location>
</feature>
<feature type="helix" evidence="10">
    <location>
        <begin position="111"/>
        <end position="114"/>
    </location>
</feature>
<feature type="strand" evidence="10">
    <location>
        <begin position="115"/>
        <end position="118"/>
    </location>
</feature>
<feature type="helix" evidence="10">
    <location>
        <begin position="125"/>
        <end position="131"/>
    </location>
</feature>
<feature type="helix" evidence="10">
    <location>
        <begin position="155"/>
        <end position="160"/>
    </location>
</feature>
<feature type="helix" evidence="10">
    <location>
        <begin position="162"/>
        <end position="180"/>
    </location>
</feature>
<feature type="helix" evidence="10">
    <location>
        <begin position="184"/>
        <end position="186"/>
    </location>
</feature>
<feature type="helix" evidence="10">
    <location>
        <begin position="187"/>
        <end position="201"/>
    </location>
</feature>
<feature type="helix" evidence="10">
    <location>
        <begin position="212"/>
        <end position="224"/>
    </location>
</feature>
<feature type="helix" evidence="10">
    <location>
        <begin position="226"/>
        <end position="238"/>
    </location>
</feature>
<feature type="helix" evidence="10">
    <location>
        <begin position="248"/>
        <end position="261"/>
    </location>
</feature>
<feature type="helix" evidence="10">
    <location>
        <begin position="266"/>
        <end position="275"/>
    </location>
</feature>
<feature type="turn" evidence="10">
    <location>
        <begin position="276"/>
        <end position="278"/>
    </location>
</feature>
<feature type="helix" evidence="10">
    <location>
        <begin position="281"/>
        <end position="284"/>
    </location>
</feature>
<feature type="turn" evidence="10">
    <location>
        <begin position="286"/>
        <end position="288"/>
    </location>
</feature>
<feature type="helix" evidence="10">
    <location>
        <begin position="289"/>
        <end position="305"/>
    </location>
</feature>
<feature type="helix" evidence="10">
    <location>
        <begin position="306"/>
        <end position="311"/>
    </location>
</feature>
<feature type="turn" evidence="10">
    <location>
        <begin position="312"/>
        <end position="316"/>
    </location>
</feature>
<feature type="turn" evidence="10">
    <location>
        <begin position="318"/>
        <end position="323"/>
    </location>
</feature>
<feature type="helix" evidence="10">
    <location>
        <begin position="325"/>
        <end position="327"/>
    </location>
</feature>
<feature type="helix" evidence="10">
    <location>
        <begin position="329"/>
        <end position="342"/>
    </location>
</feature>
<feature type="strand" evidence="10">
    <location>
        <begin position="343"/>
        <end position="345"/>
    </location>
</feature>
<feature type="helix" evidence="10">
    <location>
        <begin position="358"/>
        <end position="373"/>
    </location>
</feature>
<reference key="1">
    <citation type="journal article" date="1986" name="J. Gen. Virol.">
        <title>Complete sequence of the major nucleocapsid protein gene of human parainfluenza type 3 virus: comparison with other negative strand viruses.</title>
        <authorList>
            <person name="Jambou R.C."/>
            <person name="Elango N."/>
            <person name="Venkatesan S."/>
            <person name="Collins P.L."/>
        </authorList>
    </citation>
    <scope>NUCLEOTIDE SEQUENCE [GENOMIC RNA]</scope>
</reference>
<reference key="2">
    <citation type="journal article" date="1986" name="Virology">
        <title>Conserved structures among the nucleocapsid proteins of the paramyxoviridae: complete nucleotide sequence of human parainfluenza virus type 3 NP mRNA.</title>
        <authorList>
            <person name="Sanchez A."/>
            <person name="Banerjee A.K."/>
            <person name="Furuichi Y."/>
            <person name="Richardson M.A."/>
        </authorList>
    </citation>
    <scope>NUCLEOTIDE SEQUENCE [GENOMIC RNA]</scope>
</reference>
<reference key="3">
    <citation type="journal article" date="1986" name="Virology">
        <title>Molecular cloning and sequence analysis of the human parainfluenza 3 virus RNA encoding the nucleocapsid protein.</title>
        <authorList>
            <person name="Galinski M.S."/>
            <person name="Mink M.A."/>
            <person name="Lambert D.M."/>
            <person name="Wechsler S.L."/>
            <person name="Pons M.W."/>
        </authorList>
    </citation>
    <scope>NUCLEOTIDE SEQUENCE [GENOMIC RNA / MRNA]</scope>
    <source>
        <strain>Isolate 104B44</strain>
    </source>
</reference>
<reference key="4">
    <citation type="journal article" date="1993" name="Virus Res.">
        <title>The complete nucleotide sequence of two cold-adapted, temperature-sensitive attenuated mutant vaccine viruses (cp12 and cp45) derived from the JS strain of human parainfluenza virus type 3 (PIV3).</title>
        <authorList>
            <person name="Stokes A."/>
            <person name="Tierney E.L."/>
            <person name="Sarris C.M."/>
            <person name="Murphy B.R."/>
            <person name="Hall S.L."/>
        </authorList>
    </citation>
    <scope>NUCLEOTIDE SEQUENCE [GENOMIC RNA]</scope>
    <source>
        <strain>JS</strain>
    </source>
</reference>
<reference key="5">
    <citation type="journal article" date="1997" name="Virology">
        <title>Minimum protein requirements for transcription and RNA replication of a minigenome of human parainfluenza virus type 3 and evaluation of the rule of six.</title>
        <authorList>
            <person name="Durbin A.P."/>
            <person name="Siew J.W."/>
            <person name="Murphy B.R."/>
            <person name="Collins P.L."/>
        </authorList>
    </citation>
    <scope>RNA-BINDING</scope>
    <source>
        <strain>JS</strain>
    </source>
</reference>
<reference key="6">
    <citation type="journal article" date="2000" name="J. Virol.">
        <title>Role of NH(2)- and COOH-terminal domains of the P protein of human parainfluenza virus type 3 in transcription and replication.</title>
        <authorList>
            <person name="De B.P."/>
            <person name="Hoffman M.A."/>
            <person name="Choudhary S."/>
            <person name="Huntley C.C."/>
            <person name="Banerjee A.K."/>
        </authorList>
    </citation>
    <scope>INTERACTION WITH THE PHOSPHOPROTEIN</scope>
</reference>
<reference key="7">
    <citation type="journal article" date="2018" name="PLoS Pathog.">
        <title>Inclusion bodies of human parainfluenza virus type 3 inhibit antiviral stress granule formation by shielding viral RNAs.</title>
        <authorList>
            <person name="Hu Z."/>
            <person name="Wang Y."/>
            <person name="Tang Q."/>
            <person name="Yang X."/>
            <person name="Qin Y."/>
            <person name="Chen M."/>
        </authorList>
    </citation>
    <scope>FUNCTION</scope>
    <scope>MUTAGENESIS OF LEU-478</scope>
</reference>
<reference evidence="9" key="8">
    <citation type="journal article" date="2022" name="J. Virol.">
        <title>Structural Basis of Human Parainfluenza Virus 3 Unassembled Nucleoprotein in Complex with Its Viral Chaperone.</title>
        <authorList>
            <person name="Dong X."/>
            <person name="Wang X."/>
            <person name="Xie M."/>
            <person name="Wu W."/>
            <person name="Chen Z."/>
        </authorList>
    </citation>
    <scope>X-RAY CRYSTALLOGRAPHY (3.23 ANGSTROMS) OF 29-374</scope>
    <scope>INTERACTION WITH THE PHOSPHOPROTEIN</scope>
    <scope>FUNCTION</scope>
    <scope>DOMAIN</scope>
</reference>
<comment type="function">
    <text evidence="4 5 6 8">Forms the helical nucleocapsid (NC) in a ratio of 1 N per 6 ribonucleotides, protecting the genome from nucleases (Probable). The encapsidated genomic RNA serves as template for transcription and replication; encapsidation by N is coupled to RNA synthesis (PubMed:10846069). Forms the encapsidation complex with the phosphoprotein protein P (PubMed:10846069). Before encapsidation, the newly synthesized free N protein, so-called N0, is chaperoned by P (PubMed:34730394). Together with P, inhibits the integrated stress response (ISR) in the infected cell via the formation of inclusion bodies (IBs) shielding its own newly synthesized viral RNAs (PubMed:29518158). Stress granule formation is thus blocked, which allows protein synthesis and viral replication (PubMed:29518158).</text>
</comment>
<comment type="subunit">
    <text evidence="1 2 4 6">Homomultimer; forms the nucleocapsid (By similarity). Binds to the viral genomic RNA (By similarity). N0 interacts with the phosphoprotein (via N-terminus); this interaction allows P to chaperon N0 to avoid N polymerization before encapsidation (PubMed:34730394). Interacts as N-RNA template with the phosphoprotein (via C-terminus); this interaction positions the polymerase on the template (PubMed:10846069).</text>
</comment>
<comment type="subcellular location">
    <subcellularLocation>
        <location evidence="8">Virion</location>
    </subcellularLocation>
    <subcellularLocation>
        <location>Host cytoplasm</location>
    </subcellularLocation>
</comment>
<comment type="domain">
    <text evidence="7">Ncore is globular and carries the regions required for self-assembly and RNA-binding. Ntail is an intrinsically disordered monomeric domain in the C-terminus.</text>
</comment>
<comment type="similarity">
    <text evidence="8">Belongs to the paramyxoviruses nucleocapsid family.</text>
</comment>
<protein>
    <recommendedName>
        <fullName>Nucleoprotein</fullName>
    </recommendedName>
    <alternativeName>
        <fullName>Nucleocapsid protein</fullName>
        <shortName>NP</shortName>
        <shortName>Protein N</shortName>
    </alternativeName>
</protein>
<sequence length="515" mass="57827">MLSLFDTFNARRQENITKSAGGAIIPGQKNTVSIFALGPTITDDNEKMTLALLFLSHSLDNEKQHAQRAGFLVSLLSMAYANPELYLTTNGSNADVKYVIYMIEKDLKRQKYGGFVVKTREMIYEKTTEWIFGSDLDYDQETMLQNGRNNSTIEDLVHTFGYPSCLGALIIQIWIVLVKAITSISGLRKGFFTRLEAFRQDGTVQAGLVLSGDTVDQIGSIMRSQQSLVTLMVETLITMNTSRNDLTTIEKNIQIVGNYIRDAGLASFFNTIRYGIETRMAALTLSTLRPDINRLKALMELYLSKGPRAPFICILRDPIHGEFAPGNYPAIWSYAMGVAVVQNRAMQQYVTGRSYLDIDMFQLGQAVARDAEAQMSSTLEDELGVTHEAKESLKRHIRNINSSETSFHKPTGGSAIEMAIDEEPEQFEHRADQEQDGEPQSSIIQYAWAEGNRSDDRTEQATESDNIKTEQQNIRDRLNKRLNDKKKQGSQPSTNPTNRTNQDEIDDLFNAFGSN</sequence>
<name>NCAP_PI3H4</name>
<evidence type="ECO:0000250" key="1">
    <source>
        <dbReference type="UniProtKB" id="O57286"/>
    </source>
</evidence>
<evidence type="ECO:0000250" key="2">
    <source>
        <dbReference type="UniProtKB" id="Q07097"/>
    </source>
</evidence>
<evidence type="ECO:0000256" key="3">
    <source>
        <dbReference type="SAM" id="MobiDB-lite"/>
    </source>
</evidence>
<evidence type="ECO:0000269" key="4">
    <source>
    </source>
</evidence>
<evidence type="ECO:0000269" key="5">
    <source>
    </source>
</evidence>
<evidence type="ECO:0000269" key="6">
    <source>
    </source>
</evidence>
<evidence type="ECO:0000303" key="7">
    <source>
    </source>
</evidence>
<evidence type="ECO:0000305" key="8"/>
<evidence type="ECO:0007744" key="9">
    <source>
        <dbReference type="PDB" id="7EV8"/>
    </source>
</evidence>
<evidence type="ECO:0007829" key="10">
    <source>
        <dbReference type="PDB" id="7EV8"/>
    </source>
</evidence>
<dbReference type="EMBL" id="D10025">
    <property type="protein sequence ID" value="BAA00915.1"/>
    <property type="molecule type" value="mRNA"/>
</dbReference>
<dbReference type="EMBL" id="X04612">
    <property type="protein sequence ID" value="CAA28282.1"/>
    <property type="molecule type" value="Genomic_RNA"/>
</dbReference>
<dbReference type="EMBL" id="M11849">
    <property type="protein sequence ID" value="AAA46863.1"/>
    <property type="molecule type" value="Genomic_RNA"/>
</dbReference>
<dbReference type="EMBL" id="M14552">
    <property type="protein sequence ID" value="AAA46864.1"/>
    <property type="molecule type" value="Genomic_RNA"/>
</dbReference>
<dbReference type="EMBL" id="U51116">
    <property type="protein sequence ID" value="AAB48684.1"/>
    <property type="molecule type" value="Genomic_RNA"/>
</dbReference>
<dbReference type="PIR" id="A24285">
    <property type="entry name" value="VHNZP3"/>
</dbReference>
<dbReference type="PDB" id="7EV8">
    <property type="method" value="X-ray"/>
    <property type="resolution" value="3.23 A"/>
    <property type="chains" value="A=29-374"/>
</dbReference>
<dbReference type="PDBsum" id="7EV8"/>
<dbReference type="SMR" id="P06159"/>
<dbReference type="DIP" id="DIP-1086N"/>
<dbReference type="Proteomes" id="UP000108054">
    <property type="component" value="Genome"/>
</dbReference>
<dbReference type="GO" id="GO:0019029">
    <property type="term" value="C:helical viral capsid"/>
    <property type="evidence" value="ECO:0007669"/>
    <property type="project" value="UniProtKB-KW"/>
</dbReference>
<dbReference type="GO" id="GO:0030430">
    <property type="term" value="C:host cell cytoplasm"/>
    <property type="evidence" value="ECO:0007669"/>
    <property type="project" value="UniProtKB-SubCell"/>
</dbReference>
<dbReference type="GO" id="GO:1990904">
    <property type="term" value="C:ribonucleoprotein complex"/>
    <property type="evidence" value="ECO:0007669"/>
    <property type="project" value="UniProtKB-KW"/>
</dbReference>
<dbReference type="GO" id="GO:0019013">
    <property type="term" value="C:viral nucleocapsid"/>
    <property type="evidence" value="ECO:0007669"/>
    <property type="project" value="UniProtKB-KW"/>
</dbReference>
<dbReference type="GO" id="GO:0003723">
    <property type="term" value="F:RNA binding"/>
    <property type="evidence" value="ECO:0007669"/>
    <property type="project" value="UniProtKB-KW"/>
</dbReference>
<dbReference type="GO" id="GO:0005198">
    <property type="term" value="F:structural molecule activity"/>
    <property type="evidence" value="ECO:0007669"/>
    <property type="project" value="InterPro"/>
</dbReference>
<dbReference type="InterPro" id="IPR002021">
    <property type="entry name" value="Paramyx_ncap"/>
</dbReference>
<dbReference type="Pfam" id="PF00973">
    <property type="entry name" value="Paramyxo_ncap"/>
    <property type="match status" value="1"/>
</dbReference>
<organismHost>
    <name type="scientific">Homo sapiens</name>
    <name type="common">Human</name>
    <dbReference type="NCBI Taxonomy" id="9606"/>
</organismHost>
<organism>
    <name type="scientific">Human parainfluenza 3 virus (strain Wash/47885/57)</name>
    <name type="common">HPIV-3</name>
    <name type="synonym">Human parainfluenza 3 virus (strain NIH 47885)</name>
    <dbReference type="NCBI Taxonomy" id="11217"/>
    <lineage>
        <taxon>Viruses</taxon>
        <taxon>Riboviria</taxon>
        <taxon>Orthornavirae</taxon>
        <taxon>Negarnaviricota</taxon>
        <taxon>Haploviricotina</taxon>
        <taxon>Monjiviricetes</taxon>
        <taxon>Mononegavirales</taxon>
        <taxon>Paramyxoviridae</taxon>
        <taxon>Feraresvirinae</taxon>
        <taxon>Respirovirus</taxon>
        <taxon>Respirovirus pneumoniae</taxon>
    </lineage>
</organism>
<gene>
    <name type="primary">N</name>
    <name type="synonym">NP</name>
</gene>
<accession>P06159</accession>
<accession>Q81075</accession>
<proteinExistence type="evidence at protein level"/>